<keyword id="KW-0560">Oxidoreductase</keyword>
<name>MSRB_STAA1</name>
<proteinExistence type="inferred from homology"/>
<accession>A7X2A9</accession>
<reference key="1">
    <citation type="journal article" date="2008" name="Antimicrob. Agents Chemother.">
        <title>Mutated response regulator graR is responsible for phenotypic conversion of Staphylococcus aureus from heterogeneous vancomycin-intermediate resistance to vancomycin-intermediate resistance.</title>
        <authorList>
            <person name="Neoh H.-M."/>
            <person name="Cui L."/>
            <person name="Yuzawa H."/>
            <person name="Takeuchi F."/>
            <person name="Matsuo M."/>
            <person name="Hiramatsu K."/>
        </authorList>
    </citation>
    <scope>NUCLEOTIDE SEQUENCE [LARGE SCALE GENOMIC DNA]</scope>
    <source>
        <strain>Mu3 / ATCC 700698</strain>
    </source>
</reference>
<organism>
    <name type="scientific">Staphylococcus aureus (strain Mu3 / ATCC 700698)</name>
    <dbReference type="NCBI Taxonomy" id="418127"/>
    <lineage>
        <taxon>Bacteria</taxon>
        <taxon>Bacillati</taxon>
        <taxon>Bacillota</taxon>
        <taxon>Bacilli</taxon>
        <taxon>Bacillales</taxon>
        <taxon>Staphylococcaceae</taxon>
        <taxon>Staphylococcus</taxon>
    </lineage>
</organism>
<dbReference type="EC" id="1.8.4.12" evidence="1"/>
<dbReference type="EMBL" id="AP009324">
    <property type="protein sequence ID" value="BAF78294.1"/>
    <property type="molecule type" value="Genomic_DNA"/>
</dbReference>
<dbReference type="RefSeq" id="WP_000913317.1">
    <property type="nucleotide sequence ID" value="NC_009782.1"/>
</dbReference>
<dbReference type="SMR" id="A7X2A9"/>
<dbReference type="KEGG" id="saw:SAHV_1411"/>
<dbReference type="HOGENOM" id="CLU_031040_8_5_9"/>
<dbReference type="GO" id="GO:0005737">
    <property type="term" value="C:cytoplasm"/>
    <property type="evidence" value="ECO:0007669"/>
    <property type="project" value="TreeGrafter"/>
</dbReference>
<dbReference type="GO" id="GO:0033743">
    <property type="term" value="F:peptide-methionine (R)-S-oxide reductase activity"/>
    <property type="evidence" value="ECO:0007669"/>
    <property type="project" value="UniProtKB-UniRule"/>
</dbReference>
<dbReference type="GO" id="GO:0030091">
    <property type="term" value="P:protein repair"/>
    <property type="evidence" value="ECO:0007669"/>
    <property type="project" value="InterPro"/>
</dbReference>
<dbReference type="GO" id="GO:0006979">
    <property type="term" value="P:response to oxidative stress"/>
    <property type="evidence" value="ECO:0007669"/>
    <property type="project" value="InterPro"/>
</dbReference>
<dbReference type="FunFam" id="2.170.150.20:FF:000003">
    <property type="entry name" value="Peptide methionine sulfoxide reductase MsrB"/>
    <property type="match status" value="1"/>
</dbReference>
<dbReference type="Gene3D" id="2.170.150.20">
    <property type="entry name" value="Peptide methionine sulfoxide reductase"/>
    <property type="match status" value="1"/>
</dbReference>
<dbReference type="HAMAP" id="MF_01400">
    <property type="entry name" value="MsrB"/>
    <property type="match status" value="1"/>
</dbReference>
<dbReference type="InterPro" id="IPR028427">
    <property type="entry name" value="Met_Sox_Rdtase_MsrB"/>
</dbReference>
<dbReference type="InterPro" id="IPR002579">
    <property type="entry name" value="Met_Sox_Rdtase_MsrB_dom"/>
</dbReference>
<dbReference type="InterPro" id="IPR011057">
    <property type="entry name" value="Mss4-like_sf"/>
</dbReference>
<dbReference type="NCBIfam" id="TIGR00357">
    <property type="entry name" value="peptide-methionine (R)-S-oxide reductase MsrB"/>
    <property type="match status" value="1"/>
</dbReference>
<dbReference type="PANTHER" id="PTHR10173">
    <property type="entry name" value="METHIONINE SULFOXIDE REDUCTASE"/>
    <property type="match status" value="1"/>
</dbReference>
<dbReference type="PANTHER" id="PTHR10173:SF59">
    <property type="entry name" value="PEPTIDE METHIONINE SULFOXIDE REDUCTASE MSRA_MSRB"/>
    <property type="match status" value="1"/>
</dbReference>
<dbReference type="Pfam" id="PF01641">
    <property type="entry name" value="SelR"/>
    <property type="match status" value="1"/>
</dbReference>
<dbReference type="SUPFAM" id="SSF51316">
    <property type="entry name" value="Mss4-like"/>
    <property type="match status" value="1"/>
</dbReference>
<dbReference type="PROSITE" id="PS51790">
    <property type="entry name" value="MSRB"/>
    <property type="match status" value="1"/>
</dbReference>
<sequence>MLKKDKSELTDIEYIVTQENGTEPPFMNEYWNHFAKGIYVDKISGKPLFTSEEKFHSECGWPSFSKALDDDEIIELVDKSFGMVRTEVRSEESNSHLGHVFNDGPKESGGLRYCINSAAIQFIPYEKLEELGYGDLISHFDK</sequence>
<evidence type="ECO:0000255" key="1">
    <source>
        <dbReference type="HAMAP-Rule" id="MF_01400"/>
    </source>
</evidence>
<evidence type="ECO:0000255" key="2">
    <source>
        <dbReference type="PROSITE-ProRule" id="PRU01126"/>
    </source>
</evidence>
<comment type="catalytic activity">
    <reaction evidence="1">
        <text>L-methionyl-[protein] + [thioredoxin]-disulfide + H2O = L-methionyl-(R)-S-oxide-[protein] + [thioredoxin]-dithiol</text>
        <dbReference type="Rhea" id="RHEA:24164"/>
        <dbReference type="Rhea" id="RHEA-COMP:10698"/>
        <dbReference type="Rhea" id="RHEA-COMP:10700"/>
        <dbReference type="Rhea" id="RHEA-COMP:12313"/>
        <dbReference type="Rhea" id="RHEA-COMP:12314"/>
        <dbReference type="ChEBI" id="CHEBI:15377"/>
        <dbReference type="ChEBI" id="CHEBI:16044"/>
        <dbReference type="ChEBI" id="CHEBI:29950"/>
        <dbReference type="ChEBI" id="CHEBI:45764"/>
        <dbReference type="ChEBI" id="CHEBI:50058"/>
        <dbReference type="EC" id="1.8.4.12"/>
    </reaction>
</comment>
<comment type="similarity">
    <text evidence="1">Belongs to the MsrB Met sulfoxide reductase family.</text>
</comment>
<feature type="chain" id="PRO_1000068295" description="Peptide methionine sulfoxide reductase MsrB">
    <location>
        <begin position="1"/>
        <end position="142"/>
    </location>
</feature>
<feature type="domain" description="MsrB" evidence="2">
    <location>
        <begin position="2"/>
        <end position="125"/>
    </location>
</feature>
<feature type="active site" description="Nucleophile" evidence="2">
    <location>
        <position position="114"/>
    </location>
</feature>
<protein>
    <recommendedName>
        <fullName evidence="1">Peptide methionine sulfoxide reductase MsrB</fullName>
        <ecNumber evidence="1">1.8.4.12</ecNumber>
    </recommendedName>
    <alternativeName>
        <fullName evidence="1">Peptide-methionine (R)-S-oxide reductase</fullName>
    </alternativeName>
</protein>
<gene>
    <name evidence="1" type="primary">msrB</name>
    <name type="ordered locus">SAHV_1411</name>
</gene>